<reference key="1">
    <citation type="submission" date="2007-06" db="EMBL/GenBank/DDBJ databases">
        <title>Complete sequence of Methanococcus maripaludis C7.</title>
        <authorList>
            <consortium name="US DOE Joint Genome Institute"/>
            <person name="Copeland A."/>
            <person name="Lucas S."/>
            <person name="Lapidus A."/>
            <person name="Barry K."/>
            <person name="Glavina del Rio T."/>
            <person name="Dalin E."/>
            <person name="Tice H."/>
            <person name="Pitluck S."/>
            <person name="Clum A."/>
            <person name="Schmutz J."/>
            <person name="Larimer F."/>
            <person name="Land M."/>
            <person name="Hauser L."/>
            <person name="Kyrpides N."/>
            <person name="Anderson I."/>
            <person name="Sieprawska-Lupa M."/>
            <person name="Whitman W.B."/>
            <person name="Richardson P."/>
        </authorList>
    </citation>
    <scope>NUCLEOTIDE SEQUENCE [LARGE SCALE GENOMIC DNA]</scope>
    <source>
        <strain>C7 / ATCC BAA-1331</strain>
    </source>
</reference>
<protein>
    <recommendedName>
        <fullName evidence="1">UPF0235 protein MmarC7_0309</fullName>
    </recommendedName>
</protein>
<comment type="similarity">
    <text evidence="1">Belongs to the UPF0235 family.</text>
</comment>
<sequence>MIEEIVKESEKGILIDIEVTTNAKKNEIGKINEWRKRIEIRIREQPIEGKANKAIVKFLKGIFKSEIFINSGTTSSQKTVLIPDKTKEDVVKILKKEIKSI</sequence>
<evidence type="ECO:0000255" key="1">
    <source>
        <dbReference type="HAMAP-Rule" id="MF_00634"/>
    </source>
</evidence>
<feature type="chain" id="PRO_1000056771" description="UPF0235 protein MmarC7_0309">
    <location>
        <begin position="1"/>
        <end position="101"/>
    </location>
</feature>
<dbReference type="EMBL" id="CP000745">
    <property type="protein sequence ID" value="ABR65379.1"/>
    <property type="molecule type" value="Genomic_DNA"/>
</dbReference>
<dbReference type="SMR" id="A6VG03"/>
<dbReference type="STRING" id="426368.MmarC7_0309"/>
<dbReference type="KEGG" id="mmz:MmarC7_0309"/>
<dbReference type="eggNOG" id="arCOG04058">
    <property type="taxonomic scope" value="Archaea"/>
</dbReference>
<dbReference type="HOGENOM" id="CLU_130694_6_1_2"/>
<dbReference type="OrthoDB" id="53248at2157"/>
<dbReference type="GO" id="GO:0005737">
    <property type="term" value="C:cytoplasm"/>
    <property type="evidence" value="ECO:0007669"/>
    <property type="project" value="TreeGrafter"/>
</dbReference>
<dbReference type="Gene3D" id="3.30.1200.10">
    <property type="entry name" value="YggU-like"/>
    <property type="match status" value="1"/>
</dbReference>
<dbReference type="HAMAP" id="MF_00634">
    <property type="entry name" value="UPF0235"/>
    <property type="match status" value="1"/>
</dbReference>
<dbReference type="InterPro" id="IPR003746">
    <property type="entry name" value="DUF167"/>
</dbReference>
<dbReference type="InterPro" id="IPR036591">
    <property type="entry name" value="YggU-like_sf"/>
</dbReference>
<dbReference type="NCBIfam" id="TIGR00251">
    <property type="entry name" value="DUF167 family protein"/>
    <property type="match status" value="1"/>
</dbReference>
<dbReference type="PANTHER" id="PTHR13420">
    <property type="entry name" value="UPF0235 PROTEIN C15ORF40"/>
    <property type="match status" value="1"/>
</dbReference>
<dbReference type="PANTHER" id="PTHR13420:SF7">
    <property type="entry name" value="UPF0235 PROTEIN C15ORF40"/>
    <property type="match status" value="1"/>
</dbReference>
<dbReference type="Pfam" id="PF02594">
    <property type="entry name" value="DUF167"/>
    <property type="match status" value="1"/>
</dbReference>
<dbReference type="SMART" id="SM01152">
    <property type="entry name" value="DUF167"/>
    <property type="match status" value="1"/>
</dbReference>
<dbReference type="SUPFAM" id="SSF69786">
    <property type="entry name" value="YggU-like"/>
    <property type="match status" value="1"/>
</dbReference>
<proteinExistence type="inferred from homology"/>
<accession>A6VG03</accession>
<name>Y309_METM7</name>
<organism>
    <name type="scientific">Methanococcus maripaludis (strain C7 / ATCC BAA-1331)</name>
    <dbReference type="NCBI Taxonomy" id="426368"/>
    <lineage>
        <taxon>Archaea</taxon>
        <taxon>Methanobacteriati</taxon>
        <taxon>Methanobacteriota</taxon>
        <taxon>Methanomada group</taxon>
        <taxon>Methanococci</taxon>
        <taxon>Methanococcales</taxon>
        <taxon>Methanococcaceae</taxon>
        <taxon>Methanococcus</taxon>
    </lineage>
</organism>
<gene>
    <name type="ordered locus">MmarC7_0309</name>
</gene>